<comment type="function">
    <text evidence="1">Functions in the N-end rule pathway of protein degradation where it conjugates Leu, Phe and, less efficiently, Met from aminoacyl-tRNAs to the N-termini of proteins containing an N-terminal arginine or lysine.</text>
</comment>
<comment type="catalytic activity">
    <reaction evidence="1">
        <text>N-terminal L-lysyl-[protein] + L-leucyl-tRNA(Leu) = N-terminal L-leucyl-L-lysyl-[protein] + tRNA(Leu) + H(+)</text>
        <dbReference type="Rhea" id="RHEA:12340"/>
        <dbReference type="Rhea" id="RHEA-COMP:9613"/>
        <dbReference type="Rhea" id="RHEA-COMP:9622"/>
        <dbReference type="Rhea" id="RHEA-COMP:12670"/>
        <dbReference type="Rhea" id="RHEA-COMP:12671"/>
        <dbReference type="ChEBI" id="CHEBI:15378"/>
        <dbReference type="ChEBI" id="CHEBI:65249"/>
        <dbReference type="ChEBI" id="CHEBI:78442"/>
        <dbReference type="ChEBI" id="CHEBI:78494"/>
        <dbReference type="ChEBI" id="CHEBI:133043"/>
        <dbReference type="EC" id="2.3.2.6"/>
    </reaction>
</comment>
<comment type="catalytic activity">
    <reaction evidence="1">
        <text>N-terminal L-arginyl-[protein] + L-leucyl-tRNA(Leu) = N-terminal L-leucyl-L-arginyl-[protein] + tRNA(Leu) + H(+)</text>
        <dbReference type="Rhea" id="RHEA:50416"/>
        <dbReference type="Rhea" id="RHEA-COMP:9613"/>
        <dbReference type="Rhea" id="RHEA-COMP:9622"/>
        <dbReference type="Rhea" id="RHEA-COMP:12672"/>
        <dbReference type="Rhea" id="RHEA-COMP:12673"/>
        <dbReference type="ChEBI" id="CHEBI:15378"/>
        <dbReference type="ChEBI" id="CHEBI:64719"/>
        <dbReference type="ChEBI" id="CHEBI:78442"/>
        <dbReference type="ChEBI" id="CHEBI:78494"/>
        <dbReference type="ChEBI" id="CHEBI:133044"/>
        <dbReference type="EC" id="2.3.2.6"/>
    </reaction>
</comment>
<comment type="catalytic activity">
    <reaction evidence="1">
        <text>L-phenylalanyl-tRNA(Phe) + an N-terminal L-alpha-aminoacyl-[protein] = an N-terminal L-phenylalanyl-L-alpha-aminoacyl-[protein] + tRNA(Phe)</text>
        <dbReference type="Rhea" id="RHEA:43632"/>
        <dbReference type="Rhea" id="RHEA-COMP:9668"/>
        <dbReference type="Rhea" id="RHEA-COMP:9699"/>
        <dbReference type="Rhea" id="RHEA-COMP:10636"/>
        <dbReference type="Rhea" id="RHEA-COMP:10637"/>
        <dbReference type="ChEBI" id="CHEBI:78442"/>
        <dbReference type="ChEBI" id="CHEBI:78531"/>
        <dbReference type="ChEBI" id="CHEBI:78597"/>
        <dbReference type="ChEBI" id="CHEBI:83561"/>
        <dbReference type="EC" id="2.3.2.6"/>
    </reaction>
</comment>
<comment type="subcellular location">
    <subcellularLocation>
        <location evidence="1">Cytoplasm</location>
    </subcellularLocation>
</comment>
<comment type="similarity">
    <text evidence="1">Belongs to the L/F-transferase family.</text>
</comment>
<accession>Q0A7X8</accession>
<protein>
    <recommendedName>
        <fullName evidence="1">Leucyl/phenylalanyl-tRNA--protein transferase</fullName>
        <ecNumber evidence="1">2.3.2.6</ecNumber>
    </recommendedName>
    <alternativeName>
        <fullName evidence="1">L/F-transferase</fullName>
    </alternativeName>
    <alternativeName>
        <fullName evidence="1">Leucyltransferase</fullName>
    </alternativeName>
    <alternativeName>
        <fullName evidence="1">Phenyalanyltransferase</fullName>
    </alternativeName>
</protein>
<gene>
    <name evidence="1" type="primary">aat</name>
    <name type="ordered locus">Mlg_1713</name>
</gene>
<feature type="chain" id="PRO_0000304324" description="Leucyl/phenylalanyl-tRNA--protein transferase">
    <location>
        <begin position="1"/>
        <end position="258"/>
    </location>
</feature>
<organism>
    <name type="scientific">Alkalilimnicola ehrlichii (strain ATCC BAA-1101 / DSM 17681 / MLHE-1)</name>
    <dbReference type="NCBI Taxonomy" id="187272"/>
    <lineage>
        <taxon>Bacteria</taxon>
        <taxon>Pseudomonadati</taxon>
        <taxon>Pseudomonadota</taxon>
        <taxon>Gammaproteobacteria</taxon>
        <taxon>Chromatiales</taxon>
        <taxon>Ectothiorhodospiraceae</taxon>
        <taxon>Alkalilimnicola</taxon>
    </lineage>
</organism>
<reference key="1">
    <citation type="submission" date="2006-08" db="EMBL/GenBank/DDBJ databases">
        <title>Complete sequence of Alkalilimnicola ehrilichei MLHE-1.</title>
        <authorList>
            <person name="Copeland A."/>
            <person name="Lucas S."/>
            <person name="Lapidus A."/>
            <person name="Barry K."/>
            <person name="Detter J.C."/>
            <person name="Glavina del Rio T."/>
            <person name="Hammon N."/>
            <person name="Israni S."/>
            <person name="Dalin E."/>
            <person name="Tice H."/>
            <person name="Pitluck S."/>
            <person name="Sims D."/>
            <person name="Brettin T."/>
            <person name="Bruce D."/>
            <person name="Han C."/>
            <person name="Tapia R."/>
            <person name="Gilna P."/>
            <person name="Schmutz J."/>
            <person name="Larimer F."/>
            <person name="Land M."/>
            <person name="Hauser L."/>
            <person name="Kyrpides N."/>
            <person name="Mikhailova N."/>
            <person name="Oremland R.S."/>
            <person name="Hoeft S.E."/>
            <person name="Switzer-Blum J."/>
            <person name="Kulp T."/>
            <person name="King G."/>
            <person name="Tabita R."/>
            <person name="Witte B."/>
            <person name="Santini J.M."/>
            <person name="Basu P."/>
            <person name="Hollibaugh J.T."/>
            <person name="Xie G."/>
            <person name="Stolz J.F."/>
            <person name="Richardson P."/>
        </authorList>
    </citation>
    <scope>NUCLEOTIDE SEQUENCE [LARGE SCALE GENOMIC DNA]</scope>
    <source>
        <strain>ATCC BAA-1101 / DSM 17681 / MLHE-1</strain>
    </source>
</reference>
<name>LFTR_ALKEH</name>
<proteinExistence type="inferred from homology"/>
<dbReference type="EC" id="2.3.2.6" evidence="1"/>
<dbReference type="EMBL" id="CP000453">
    <property type="protein sequence ID" value="ABI57059.1"/>
    <property type="molecule type" value="Genomic_DNA"/>
</dbReference>
<dbReference type="RefSeq" id="WP_011629453.1">
    <property type="nucleotide sequence ID" value="NC_008340.1"/>
</dbReference>
<dbReference type="SMR" id="Q0A7X8"/>
<dbReference type="KEGG" id="aeh:Mlg_1713"/>
<dbReference type="eggNOG" id="COG2360">
    <property type="taxonomic scope" value="Bacteria"/>
</dbReference>
<dbReference type="HOGENOM" id="CLU_075045_0_0_6"/>
<dbReference type="OrthoDB" id="9790282at2"/>
<dbReference type="Proteomes" id="UP000001962">
    <property type="component" value="Chromosome"/>
</dbReference>
<dbReference type="GO" id="GO:0005737">
    <property type="term" value="C:cytoplasm"/>
    <property type="evidence" value="ECO:0007669"/>
    <property type="project" value="UniProtKB-SubCell"/>
</dbReference>
<dbReference type="GO" id="GO:0008914">
    <property type="term" value="F:leucyl-tRNA--protein transferase activity"/>
    <property type="evidence" value="ECO:0007669"/>
    <property type="project" value="UniProtKB-UniRule"/>
</dbReference>
<dbReference type="GO" id="GO:0030163">
    <property type="term" value="P:protein catabolic process"/>
    <property type="evidence" value="ECO:0007669"/>
    <property type="project" value="UniProtKB-UniRule"/>
</dbReference>
<dbReference type="FunFam" id="3.30.70.3550:FF:000001">
    <property type="entry name" value="Leucyl/phenylalanyl-tRNA--protein transferase"/>
    <property type="match status" value="1"/>
</dbReference>
<dbReference type="Gene3D" id="3.40.630.70">
    <property type="entry name" value="Leucyl/phenylalanyl-tRNA-protein transferase, C-terminal domain"/>
    <property type="match status" value="1"/>
</dbReference>
<dbReference type="Gene3D" id="3.30.70.3550">
    <property type="entry name" value="Leucyl/phenylalanyl-tRNA-protein transferase, N-terminal domain"/>
    <property type="match status" value="1"/>
</dbReference>
<dbReference type="HAMAP" id="MF_00688">
    <property type="entry name" value="Leu_Phe_trans"/>
    <property type="match status" value="1"/>
</dbReference>
<dbReference type="InterPro" id="IPR016181">
    <property type="entry name" value="Acyl_CoA_acyltransferase"/>
</dbReference>
<dbReference type="InterPro" id="IPR004616">
    <property type="entry name" value="Leu/Phe-tRNA_Trfase"/>
</dbReference>
<dbReference type="InterPro" id="IPR042203">
    <property type="entry name" value="Leu/Phe-tRNA_Trfase_C"/>
</dbReference>
<dbReference type="InterPro" id="IPR042221">
    <property type="entry name" value="Leu/Phe-tRNA_Trfase_N"/>
</dbReference>
<dbReference type="NCBIfam" id="TIGR00667">
    <property type="entry name" value="aat"/>
    <property type="match status" value="1"/>
</dbReference>
<dbReference type="PANTHER" id="PTHR30098">
    <property type="entry name" value="LEUCYL/PHENYLALANYL-TRNA--PROTEIN TRANSFERASE"/>
    <property type="match status" value="1"/>
</dbReference>
<dbReference type="PANTHER" id="PTHR30098:SF2">
    <property type="entry name" value="LEUCYL_PHENYLALANYL-TRNA--PROTEIN TRANSFERASE"/>
    <property type="match status" value="1"/>
</dbReference>
<dbReference type="Pfam" id="PF03588">
    <property type="entry name" value="Leu_Phe_trans"/>
    <property type="match status" value="1"/>
</dbReference>
<dbReference type="SUPFAM" id="SSF55729">
    <property type="entry name" value="Acyl-CoA N-acyltransferases (Nat)"/>
    <property type="match status" value="1"/>
</dbReference>
<sequence length="258" mass="29368">MYRLYWLDEHNPRSPFPPAEQAMDEPNGLLAVGGDLSPVRLEQAYRRGIFPWYGPGQPILWWSPDPRCIFRPGWLHVSRRLARRLRTGAFRMSLDTDFTGVISACAAPREDQAGTWIVPEMMHAYEALFELGIAHSVECWDRDGELVGGLYGVALSGAFFGESMFSRRSDASKACMAWLSAQLHRWGFALFDCQVSSPHLRRMGAVDVSRSRFLAQLQQALVLPHRRGPWRFDRDLDPVAIHRQHQTRTTAPEVLYGS</sequence>
<keyword id="KW-0012">Acyltransferase</keyword>
<keyword id="KW-0963">Cytoplasm</keyword>
<keyword id="KW-1185">Reference proteome</keyword>
<keyword id="KW-0808">Transferase</keyword>
<evidence type="ECO:0000255" key="1">
    <source>
        <dbReference type="HAMAP-Rule" id="MF_00688"/>
    </source>
</evidence>